<reference key="1">
    <citation type="journal article" date="2007" name="Protein J.">
        <title>Biochemical, pharmacological and structural characterization of two PLA2 isoforms Cdr-12 and Cdr-13 from Crotalus durissus ruruima snake venom.</title>
        <authorList>
            <person name="Ponce-Soto L.A."/>
            <person name="Baldasso P.A."/>
            <person name="Romero-Vargas F.F."/>
            <person name="Winck F.V."/>
            <person name="Novello J.C."/>
            <person name="Marangoni S."/>
        </authorList>
    </citation>
    <scope>PROTEIN SEQUENCE</scope>
    <scope>FUNCTION</scope>
    <scope>MASS SPECTROMETRY</scope>
    <source>
        <tissue>Venom</tissue>
    </source>
</reference>
<evidence type="ECO:0000250" key="1"/>
<evidence type="ECO:0000250" key="2">
    <source>
        <dbReference type="UniProtKB" id="P62022"/>
    </source>
</evidence>
<evidence type="ECO:0000255" key="3">
    <source>
        <dbReference type="PROSITE-ProRule" id="PRU10035"/>
    </source>
</evidence>
<evidence type="ECO:0000255" key="4">
    <source>
        <dbReference type="PROSITE-ProRule" id="PRU10036"/>
    </source>
</evidence>
<evidence type="ECO:0000269" key="5">
    <source>
    </source>
</evidence>
<evidence type="ECO:0000305" key="6"/>
<feature type="chain" id="PRO_0000376920" description="Basic phospholipase A2 Cdr-12">
    <location>
        <begin position="1"/>
        <end position="122"/>
    </location>
</feature>
<feature type="active site" evidence="2">
    <location>
        <position position="47"/>
    </location>
</feature>
<feature type="active site" evidence="2">
    <location>
        <position position="89"/>
    </location>
</feature>
<feature type="binding site" evidence="2">
    <location>
        <position position="27"/>
    </location>
    <ligand>
        <name>Ca(2+)</name>
        <dbReference type="ChEBI" id="CHEBI:29108"/>
    </ligand>
</feature>
<feature type="binding site" evidence="2">
    <location>
        <position position="29"/>
    </location>
    <ligand>
        <name>Ca(2+)</name>
        <dbReference type="ChEBI" id="CHEBI:29108"/>
    </ligand>
</feature>
<feature type="binding site" evidence="2">
    <location>
        <position position="31"/>
    </location>
    <ligand>
        <name>Ca(2+)</name>
        <dbReference type="ChEBI" id="CHEBI:29108"/>
    </ligand>
</feature>
<feature type="binding site" evidence="2">
    <location>
        <position position="48"/>
    </location>
    <ligand>
        <name>Ca(2+)</name>
        <dbReference type="ChEBI" id="CHEBI:29108"/>
    </ligand>
</feature>
<feature type="disulfide bond" evidence="2">
    <location>
        <begin position="26"/>
        <end position="115"/>
    </location>
</feature>
<feature type="disulfide bond" evidence="2">
    <location>
        <begin position="28"/>
        <end position="44"/>
    </location>
</feature>
<feature type="disulfide bond" evidence="2">
    <location>
        <begin position="43"/>
        <end position="95"/>
    </location>
</feature>
<feature type="disulfide bond" evidence="2">
    <location>
        <begin position="49"/>
        <end position="122"/>
    </location>
</feature>
<feature type="disulfide bond" evidence="2">
    <location>
        <begin position="50"/>
        <end position="88"/>
    </location>
</feature>
<feature type="disulfide bond" evidence="2">
    <location>
        <begin position="57"/>
        <end position="81"/>
    </location>
</feature>
<feature type="disulfide bond" evidence="2">
    <location>
        <begin position="75"/>
        <end position="86"/>
    </location>
</feature>
<dbReference type="EC" id="3.1.1.4"/>
<dbReference type="SMR" id="P0CAS3"/>
<dbReference type="GO" id="GO:0005576">
    <property type="term" value="C:extracellular region"/>
    <property type="evidence" value="ECO:0007669"/>
    <property type="project" value="UniProtKB-SubCell"/>
</dbReference>
<dbReference type="GO" id="GO:0005509">
    <property type="term" value="F:calcium ion binding"/>
    <property type="evidence" value="ECO:0007669"/>
    <property type="project" value="InterPro"/>
</dbReference>
<dbReference type="GO" id="GO:0047498">
    <property type="term" value="F:calcium-dependent phospholipase A2 activity"/>
    <property type="evidence" value="ECO:0007669"/>
    <property type="project" value="TreeGrafter"/>
</dbReference>
<dbReference type="GO" id="GO:0005543">
    <property type="term" value="F:phospholipid binding"/>
    <property type="evidence" value="ECO:0007669"/>
    <property type="project" value="TreeGrafter"/>
</dbReference>
<dbReference type="GO" id="GO:0090729">
    <property type="term" value="F:toxin activity"/>
    <property type="evidence" value="ECO:0007669"/>
    <property type="project" value="UniProtKB-KW"/>
</dbReference>
<dbReference type="GO" id="GO:0050482">
    <property type="term" value="P:arachidonate secretion"/>
    <property type="evidence" value="ECO:0007669"/>
    <property type="project" value="InterPro"/>
</dbReference>
<dbReference type="GO" id="GO:0016042">
    <property type="term" value="P:lipid catabolic process"/>
    <property type="evidence" value="ECO:0007669"/>
    <property type="project" value="UniProtKB-KW"/>
</dbReference>
<dbReference type="GO" id="GO:0042130">
    <property type="term" value="P:negative regulation of T cell proliferation"/>
    <property type="evidence" value="ECO:0007669"/>
    <property type="project" value="TreeGrafter"/>
</dbReference>
<dbReference type="GO" id="GO:0006644">
    <property type="term" value="P:phospholipid metabolic process"/>
    <property type="evidence" value="ECO:0007669"/>
    <property type="project" value="InterPro"/>
</dbReference>
<dbReference type="CDD" id="cd00125">
    <property type="entry name" value="PLA2c"/>
    <property type="match status" value="1"/>
</dbReference>
<dbReference type="FunFam" id="1.20.90.10:FF:000001">
    <property type="entry name" value="Basic phospholipase A2 homolog"/>
    <property type="match status" value="1"/>
</dbReference>
<dbReference type="Gene3D" id="1.20.90.10">
    <property type="entry name" value="Phospholipase A2 domain"/>
    <property type="match status" value="1"/>
</dbReference>
<dbReference type="InterPro" id="IPR001211">
    <property type="entry name" value="PLipase_A2"/>
</dbReference>
<dbReference type="InterPro" id="IPR033112">
    <property type="entry name" value="PLipase_A2_Asp_AS"/>
</dbReference>
<dbReference type="InterPro" id="IPR016090">
    <property type="entry name" value="PLipase_A2_dom"/>
</dbReference>
<dbReference type="InterPro" id="IPR036444">
    <property type="entry name" value="PLipase_A2_dom_sf"/>
</dbReference>
<dbReference type="InterPro" id="IPR033113">
    <property type="entry name" value="PLipase_A2_His_AS"/>
</dbReference>
<dbReference type="PANTHER" id="PTHR11716">
    <property type="entry name" value="PHOSPHOLIPASE A2 FAMILY MEMBER"/>
    <property type="match status" value="1"/>
</dbReference>
<dbReference type="PANTHER" id="PTHR11716:SF9">
    <property type="entry name" value="PHOSPHOLIPASE A2, MEMBRANE ASSOCIATED"/>
    <property type="match status" value="1"/>
</dbReference>
<dbReference type="Pfam" id="PF00068">
    <property type="entry name" value="Phospholip_A2_1"/>
    <property type="match status" value="1"/>
</dbReference>
<dbReference type="PRINTS" id="PR00389">
    <property type="entry name" value="PHPHLIPASEA2"/>
</dbReference>
<dbReference type="SMART" id="SM00085">
    <property type="entry name" value="PA2c"/>
    <property type="match status" value="1"/>
</dbReference>
<dbReference type="SUPFAM" id="SSF48619">
    <property type="entry name" value="Phospholipase A2, PLA2"/>
    <property type="match status" value="1"/>
</dbReference>
<dbReference type="PROSITE" id="PS00119">
    <property type="entry name" value="PA2_ASP"/>
    <property type="match status" value="1"/>
</dbReference>
<dbReference type="PROSITE" id="PS00118">
    <property type="entry name" value="PA2_HIS"/>
    <property type="match status" value="1"/>
</dbReference>
<protein>
    <recommendedName>
        <fullName>Basic phospholipase A2 Cdr-12</fullName>
        <shortName>svPLA2</shortName>
        <ecNumber>3.1.1.4</ecNumber>
    </recommendedName>
    <alternativeName>
        <fullName>Phosphatidylcholine 2-acylhydrolase</fullName>
    </alternativeName>
</protein>
<sequence>SLLQFNKMIKFETRKNAIPFYAFYGCYCGWGGQGRPKDATDRCCIVHDCCYGKLAKCNTKWDFYRYSLRSGYFQCGKGTWCEQQICECDRVAAECLRRSLSTYRYGYMIYPDSRCREPSETC</sequence>
<organism>
    <name type="scientific">Crotalus durissus ruruima</name>
    <name type="common">South American rattlesnake</name>
    <name type="synonym">Mt. Roraima rattlesnake</name>
    <dbReference type="NCBI Taxonomy" id="221570"/>
    <lineage>
        <taxon>Eukaryota</taxon>
        <taxon>Metazoa</taxon>
        <taxon>Chordata</taxon>
        <taxon>Craniata</taxon>
        <taxon>Vertebrata</taxon>
        <taxon>Euteleostomi</taxon>
        <taxon>Lepidosauria</taxon>
        <taxon>Squamata</taxon>
        <taxon>Bifurcata</taxon>
        <taxon>Unidentata</taxon>
        <taxon>Episquamata</taxon>
        <taxon>Toxicofera</taxon>
        <taxon>Serpentes</taxon>
        <taxon>Colubroidea</taxon>
        <taxon>Viperidae</taxon>
        <taxon>Crotalinae</taxon>
        <taxon>Crotalus</taxon>
    </lineage>
</organism>
<comment type="function">
    <text evidence="5">Snake venom phospholipase A2 (PLA2) that induces myonecrosis and edema upon intramuscular injections in mice. In vitro, causes a potent blockade of neuromuscular transmission in young chicken biventer cervicis preparation and produces cytotoxicity in murine C2C12 skeletal muscle myotubes and lack cytolytic activity upon myoblasts in vitro. PLA2 catalyzes the calcium-dependent hydrolysis of the 2-acyl groups in 3-sn-phosphoglycerides.</text>
</comment>
<comment type="catalytic activity">
    <reaction evidence="3 4">
        <text>a 1,2-diacyl-sn-glycero-3-phosphocholine + H2O = a 1-acyl-sn-glycero-3-phosphocholine + a fatty acid + H(+)</text>
        <dbReference type="Rhea" id="RHEA:15801"/>
        <dbReference type="ChEBI" id="CHEBI:15377"/>
        <dbReference type="ChEBI" id="CHEBI:15378"/>
        <dbReference type="ChEBI" id="CHEBI:28868"/>
        <dbReference type="ChEBI" id="CHEBI:57643"/>
        <dbReference type="ChEBI" id="CHEBI:58168"/>
        <dbReference type="EC" id="3.1.1.4"/>
    </reaction>
</comment>
<comment type="cofactor">
    <cofactor evidence="1">
        <name>Ca(2+)</name>
        <dbReference type="ChEBI" id="CHEBI:29108"/>
    </cofactor>
    <text evidence="1">Binds 1 Ca(2+) ion.</text>
</comment>
<comment type="subcellular location">
    <subcellularLocation>
        <location>Secreted</location>
    </subcellularLocation>
</comment>
<comment type="tissue specificity">
    <text>Expressed by the venom gland.</text>
</comment>
<comment type="mass spectrometry"/>
<comment type="similarity">
    <text evidence="6">Belongs to the phospholipase A2 family. Group II subfamily. D49 sub-subfamily.</text>
</comment>
<keyword id="KW-0106">Calcium</keyword>
<keyword id="KW-0903">Direct protein sequencing</keyword>
<keyword id="KW-1015">Disulfide bond</keyword>
<keyword id="KW-0378">Hydrolase</keyword>
<keyword id="KW-0442">Lipid degradation</keyword>
<keyword id="KW-0443">Lipid metabolism</keyword>
<keyword id="KW-0479">Metal-binding</keyword>
<keyword id="KW-0959">Myotoxin</keyword>
<keyword id="KW-0528">Neurotoxin</keyword>
<keyword id="KW-0964">Secreted</keyword>
<keyword id="KW-0800">Toxin</keyword>
<name>PA2BC_CRODR</name>
<proteinExistence type="evidence at protein level"/>
<accession>P0CAS3</accession>